<gene>
    <name type="ordered locus">SAR0800</name>
</gene>
<evidence type="ECO:0000255" key="1"/>
<evidence type="ECO:0000255" key="2">
    <source>
        <dbReference type="PROSITE-ProRule" id="PRU00095"/>
    </source>
</evidence>
<evidence type="ECO:0000305" key="3"/>
<accession>Q6GIP5</accession>
<protein>
    <recommendedName>
        <fullName>Uncharacterized membrane protein SAR0800</fullName>
    </recommendedName>
</protein>
<name>Y800_STAAR</name>
<feature type="chain" id="PRO_0000286954" description="Uncharacterized membrane protein SAR0800">
    <location>
        <begin position="1"/>
        <end position="356"/>
    </location>
</feature>
<feature type="transmembrane region" description="Helical" evidence="1">
    <location>
        <begin position="2"/>
        <end position="22"/>
    </location>
</feature>
<feature type="transmembrane region" description="Helical" evidence="1">
    <location>
        <begin position="35"/>
        <end position="55"/>
    </location>
</feature>
<feature type="transmembrane region" description="Helical" evidence="1">
    <location>
        <begin position="74"/>
        <end position="94"/>
    </location>
</feature>
<feature type="transmembrane region" description="Helical" evidence="1">
    <location>
        <begin position="99"/>
        <end position="119"/>
    </location>
</feature>
<feature type="transmembrane region" description="Helical" evidence="1">
    <location>
        <begin position="124"/>
        <end position="144"/>
    </location>
</feature>
<feature type="transmembrane region" description="Helical" evidence="1">
    <location>
        <begin position="154"/>
        <end position="174"/>
    </location>
</feature>
<feature type="domain" description="GGDEF" evidence="2">
    <location>
        <begin position="218"/>
        <end position="353"/>
    </location>
</feature>
<reference key="1">
    <citation type="journal article" date="2004" name="Proc. Natl. Acad. Sci. U.S.A.">
        <title>Complete genomes of two clinical Staphylococcus aureus strains: evidence for the rapid evolution of virulence and drug resistance.</title>
        <authorList>
            <person name="Holden M.T.G."/>
            <person name="Feil E.J."/>
            <person name="Lindsay J.A."/>
            <person name="Peacock S.J."/>
            <person name="Day N.P.J."/>
            <person name="Enright M.C."/>
            <person name="Foster T.J."/>
            <person name="Moore C.E."/>
            <person name="Hurst L."/>
            <person name="Atkin R."/>
            <person name="Barron A."/>
            <person name="Bason N."/>
            <person name="Bentley S.D."/>
            <person name="Chillingworth C."/>
            <person name="Chillingworth T."/>
            <person name="Churcher C."/>
            <person name="Clark L."/>
            <person name="Corton C."/>
            <person name="Cronin A."/>
            <person name="Doggett J."/>
            <person name="Dowd L."/>
            <person name="Feltwell T."/>
            <person name="Hance Z."/>
            <person name="Harris B."/>
            <person name="Hauser H."/>
            <person name="Holroyd S."/>
            <person name="Jagels K."/>
            <person name="James K.D."/>
            <person name="Lennard N."/>
            <person name="Line A."/>
            <person name="Mayes R."/>
            <person name="Moule S."/>
            <person name="Mungall K."/>
            <person name="Ormond D."/>
            <person name="Quail M.A."/>
            <person name="Rabbinowitsch E."/>
            <person name="Rutherford K.M."/>
            <person name="Sanders M."/>
            <person name="Sharp S."/>
            <person name="Simmonds M."/>
            <person name="Stevens K."/>
            <person name="Whitehead S."/>
            <person name="Barrell B.G."/>
            <person name="Spratt B.G."/>
            <person name="Parkhill J."/>
        </authorList>
    </citation>
    <scope>NUCLEOTIDE SEQUENCE [LARGE SCALE GENOMIC DNA]</scope>
    <source>
        <strain>MRSA252</strain>
    </source>
</reference>
<organism>
    <name type="scientific">Staphylococcus aureus (strain MRSA252)</name>
    <dbReference type="NCBI Taxonomy" id="282458"/>
    <lineage>
        <taxon>Bacteria</taxon>
        <taxon>Bacillati</taxon>
        <taxon>Bacillota</taxon>
        <taxon>Bacilli</taxon>
        <taxon>Bacillales</taxon>
        <taxon>Staphylococcaceae</taxon>
        <taxon>Staphylococcus</taxon>
    </lineage>
</organism>
<dbReference type="EMBL" id="BX571856">
    <property type="protein sequence ID" value="CAG39810.1"/>
    <property type="molecule type" value="Genomic_DNA"/>
</dbReference>
<dbReference type="SMR" id="Q6GIP5"/>
<dbReference type="KEGG" id="sar:SAR0800"/>
<dbReference type="HOGENOM" id="CLU_000445_11_1_9"/>
<dbReference type="Proteomes" id="UP000000596">
    <property type="component" value="Chromosome"/>
</dbReference>
<dbReference type="GO" id="GO:0005886">
    <property type="term" value="C:plasma membrane"/>
    <property type="evidence" value="ECO:0007669"/>
    <property type="project" value="UniProtKB-SubCell"/>
</dbReference>
<dbReference type="GO" id="GO:0052621">
    <property type="term" value="F:diguanylate cyclase activity"/>
    <property type="evidence" value="ECO:0007669"/>
    <property type="project" value="TreeGrafter"/>
</dbReference>
<dbReference type="GO" id="GO:0000155">
    <property type="term" value="F:phosphorelay sensor kinase activity"/>
    <property type="evidence" value="ECO:0007669"/>
    <property type="project" value="InterPro"/>
</dbReference>
<dbReference type="GO" id="GO:0043709">
    <property type="term" value="P:cell adhesion involved in single-species biofilm formation"/>
    <property type="evidence" value="ECO:0007669"/>
    <property type="project" value="TreeGrafter"/>
</dbReference>
<dbReference type="GO" id="GO:0071555">
    <property type="term" value="P:cell wall organization"/>
    <property type="evidence" value="ECO:0007669"/>
    <property type="project" value="InterPro"/>
</dbReference>
<dbReference type="GO" id="GO:1902201">
    <property type="term" value="P:negative regulation of bacterial-type flagellum-dependent cell motility"/>
    <property type="evidence" value="ECO:0007669"/>
    <property type="project" value="TreeGrafter"/>
</dbReference>
<dbReference type="CDD" id="cd01949">
    <property type="entry name" value="GGDEF"/>
    <property type="match status" value="1"/>
</dbReference>
<dbReference type="FunFam" id="3.30.70.270:FF:000038">
    <property type="entry name" value="Diguanylate cyclase domain protein"/>
    <property type="match status" value="1"/>
</dbReference>
<dbReference type="Gene3D" id="3.30.70.270">
    <property type="match status" value="1"/>
</dbReference>
<dbReference type="InterPro" id="IPR050469">
    <property type="entry name" value="Diguanylate_Cyclase"/>
</dbReference>
<dbReference type="InterPro" id="IPR000160">
    <property type="entry name" value="GGDEF_dom"/>
</dbReference>
<dbReference type="InterPro" id="IPR029787">
    <property type="entry name" value="Nucleotide_cyclase"/>
</dbReference>
<dbReference type="InterPro" id="IPR043128">
    <property type="entry name" value="Rev_trsase/Diguanyl_cyclase"/>
</dbReference>
<dbReference type="InterPro" id="IPR011620">
    <property type="entry name" value="Sig_transdc_His_kinase_LytS_TM"/>
</dbReference>
<dbReference type="NCBIfam" id="TIGR00254">
    <property type="entry name" value="GGDEF"/>
    <property type="match status" value="1"/>
</dbReference>
<dbReference type="PANTHER" id="PTHR45138:SF9">
    <property type="entry name" value="DIGUANYLATE CYCLASE DGCM-RELATED"/>
    <property type="match status" value="1"/>
</dbReference>
<dbReference type="PANTHER" id="PTHR45138">
    <property type="entry name" value="REGULATORY COMPONENTS OF SENSORY TRANSDUCTION SYSTEM"/>
    <property type="match status" value="1"/>
</dbReference>
<dbReference type="Pfam" id="PF07694">
    <property type="entry name" value="5TM-5TMR_LYT"/>
    <property type="match status" value="1"/>
</dbReference>
<dbReference type="Pfam" id="PF00990">
    <property type="entry name" value="GGDEF"/>
    <property type="match status" value="1"/>
</dbReference>
<dbReference type="SMART" id="SM00267">
    <property type="entry name" value="GGDEF"/>
    <property type="match status" value="1"/>
</dbReference>
<dbReference type="SUPFAM" id="SSF55073">
    <property type="entry name" value="Nucleotide cyclase"/>
    <property type="match status" value="1"/>
</dbReference>
<dbReference type="PROSITE" id="PS50887">
    <property type="entry name" value="GGDEF"/>
    <property type="match status" value="1"/>
</dbReference>
<comment type="subcellular location">
    <subcellularLocation>
        <location evidence="3">Cell membrane</location>
        <topology evidence="3">Multi-pass membrane protein</topology>
    </subcellularLocation>
</comment>
<sequence>MFEAFIYNISVIVAGIYLFHRLQYSENKRMVFSKAYVTVLMTIVSLLLSVYPIPYREDYLIHLTFVPLLFLGRFTNMVYTLSATVIVAIVEIVVFNNSIMYGVTLIVIAAVTSAIGPFLKQNDVLSLLILNVVTIIILFGVALVSPIYTLSEVIILIPISLIITLASAITFVDIWHFFSLVNRYENEDKYDYLTGLGNVKEFDRHLNEISRKAEKEHQSIALLLIDIDGFKDVNDTYSHKSGDAVLKQMSQLLKNYVPNQFKIFRNGGEEFSVVIHNYSLDQSVKLAENIRSGVEKSSFHLPNKEVIKLSVSIGVGYLTDDDPKSQRKVFKDADDMVHVAKNQGRNKVMFNPIINL</sequence>
<keyword id="KW-1003">Cell membrane</keyword>
<keyword id="KW-0472">Membrane</keyword>
<keyword id="KW-0812">Transmembrane</keyword>
<keyword id="KW-1133">Transmembrane helix</keyword>
<proteinExistence type="predicted"/>